<protein>
    <recommendedName>
        <fullName>Peptidyl-prolyl cis-trans isomerase 9</fullName>
        <shortName>PPIase 9</shortName>
        <ecNumber>5.2.1.8</ecNumber>
    </recommendedName>
    <alternativeName>
        <fullName>Cyclophilin-9</fullName>
    </alternativeName>
    <alternativeName>
        <fullName>Rotamase 9</fullName>
    </alternativeName>
</protein>
<reference key="1">
    <citation type="journal article" date="1996" name="Biochem. J.">
        <title>Cloning and biochemical characterization of the cyclophilin homologues from the free-living nematode Caenorhabditis elegans.</title>
        <authorList>
            <person name="Page A.P."/>
            <person name="Macniven K."/>
            <person name="Hengartner M.O."/>
        </authorList>
    </citation>
    <scope>NUCLEOTIDE SEQUENCE [MRNA]</scope>
    <source>
        <strain>Bristol N2</strain>
    </source>
</reference>
<reference key="2">
    <citation type="journal article" date="1997" name="DNA Cell Biol.">
        <title>Cyclophilin and protein disulfide isomerase genes are co-transcribed in a functionally related manner in Caenorhabditis elegans.</title>
        <authorList>
            <person name="Page A.P."/>
        </authorList>
    </citation>
    <scope>NUCLEOTIDE SEQUENCE [GENOMIC DNA]</scope>
    <scope>FUNCTION</scope>
    <scope>TISSUE SPECIFICITY</scope>
    <scope>DEVELOPMENTAL STAGE</scope>
</reference>
<reference key="3">
    <citation type="journal article" date="1998" name="Science">
        <title>Genome sequence of the nematode C. elegans: a platform for investigating biology.</title>
        <authorList>
            <consortium name="The C. elegans sequencing consortium"/>
        </authorList>
    </citation>
    <scope>NUCLEOTIDE SEQUENCE [LARGE SCALE GENOMIC DNA]</scope>
    <source>
        <strain>Bristol N2</strain>
    </source>
</reference>
<keyword id="KW-0413">Isomerase</keyword>
<keyword id="KW-1185">Reference proteome</keyword>
<keyword id="KW-0697">Rotamase</keyword>
<feature type="chain" id="PRO_0000064196" description="Peptidyl-prolyl cis-trans isomerase 9">
    <location>
        <begin position="1"/>
        <end position="309"/>
    </location>
</feature>
<feature type="domain" description="PPIase cyclophilin-type" evidence="1">
    <location>
        <begin position="8"/>
        <end position="173"/>
    </location>
</feature>
<feature type="region of interest" description="Disordered" evidence="2">
    <location>
        <begin position="217"/>
        <end position="309"/>
    </location>
</feature>
<feature type="compositionally biased region" description="Basic and acidic residues" evidence="2">
    <location>
        <begin position="217"/>
        <end position="229"/>
    </location>
</feature>
<feature type="compositionally biased region" description="Basic and acidic residues" evidence="2">
    <location>
        <begin position="239"/>
        <end position="265"/>
    </location>
</feature>
<feature type="compositionally biased region" description="Basic and acidic residues" evidence="2">
    <location>
        <begin position="280"/>
        <end position="289"/>
    </location>
</feature>
<feature type="compositionally biased region" description="Basic and acidic residues" evidence="2">
    <location>
        <begin position="296"/>
        <end position="309"/>
    </location>
</feature>
<gene>
    <name type="primary">cyn-9</name>
    <name type="synonym">cyp-9</name>
    <name type="ORF">T27D1.1</name>
</gene>
<evidence type="ECO:0000255" key="1">
    <source>
        <dbReference type="PROSITE-ProRule" id="PRU00156"/>
    </source>
</evidence>
<evidence type="ECO:0000256" key="2">
    <source>
        <dbReference type="SAM" id="MobiDB-lite"/>
    </source>
</evidence>
<evidence type="ECO:0000269" key="3">
    <source>
    </source>
</evidence>
<evidence type="ECO:0000305" key="4"/>
<sequence length="309" mass="35796">MAAEKRVFLDISVDENLIGRIEIRLFVEDAPKTCENFRALCTGEVGMTPNNKARLHYKQNEFHRIVKKFMIQGGDITEGDGRGGFSIYGRYFDDEKFKLKHSRPYLLSMANKGPNSNSSQFFITTAAAPHCNGKHVVFGEVVKGQNVVDYIDNLAVDDKSKPLAKVLISNCGELVKKKKPLKTDEELAAALEEKNNNARDNEIPKCPKSWLYRDDDNEKKHEMRNDKRREYRSRRSRSRSHEKNRDYKKENRGDSSRSQPRRDENGITVRGRGGVRFRRERSATPEHWRRNAPTKWVHDSHKHPEEDLV</sequence>
<proteinExistence type="evidence at transcript level"/>
<organism>
    <name type="scientific">Caenorhabditis elegans</name>
    <dbReference type="NCBI Taxonomy" id="6239"/>
    <lineage>
        <taxon>Eukaryota</taxon>
        <taxon>Metazoa</taxon>
        <taxon>Ecdysozoa</taxon>
        <taxon>Nematoda</taxon>
        <taxon>Chromadorea</taxon>
        <taxon>Rhabditida</taxon>
        <taxon>Rhabditina</taxon>
        <taxon>Rhabditomorpha</taxon>
        <taxon>Rhabditoidea</taxon>
        <taxon>Rhabditidae</taxon>
        <taxon>Peloderinae</taxon>
        <taxon>Caenorhabditis</taxon>
    </lineage>
</organism>
<accession>Q09637</accession>
<accession>A2NTF2</accession>
<accession>Q09339</accession>
<dbReference type="EC" id="5.2.1.8"/>
<dbReference type="EMBL" id="U36581">
    <property type="protein sequence ID" value="AAC47131.1"/>
    <property type="molecule type" value="mRNA"/>
</dbReference>
<dbReference type="EMBL" id="U95074">
    <property type="protein sequence ID" value="AAB94648.1"/>
    <property type="molecule type" value="Genomic_DNA"/>
</dbReference>
<dbReference type="EMBL" id="Z48245">
    <property type="protein sequence ID" value="CAA88291.1"/>
    <property type="molecule type" value="Genomic_DNA"/>
</dbReference>
<dbReference type="EMBL" id="Z37139">
    <property type="protein sequence ID" value="CAA88291.1"/>
    <property type="status" value="JOINED"/>
    <property type="molecule type" value="Genomic_DNA"/>
</dbReference>
<dbReference type="PIR" id="T18579">
    <property type="entry name" value="T18579"/>
</dbReference>
<dbReference type="RefSeq" id="NP_497745.1">
    <property type="nucleotide sequence ID" value="NM_065344.5"/>
</dbReference>
<dbReference type="SMR" id="Q09637"/>
<dbReference type="BioGRID" id="40711">
    <property type="interactions" value="2"/>
</dbReference>
<dbReference type="FunCoup" id="Q09637">
    <property type="interactions" value="16"/>
</dbReference>
<dbReference type="STRING" id="6239.T27D1.1.1"/>
<dbReference type="PaxDb" id="6239-T27D1.1"/>
<dbReference type="PeptideAtlas" id="Q09637"/>
<dbReference type="EnsemblMetazoa" id="T27D1.1.1">
    <property type="protein sequence ID" value="T27D1.1.1"/>
    <property type="gene ID" value="WBGene00000885"/>
</dbReference>
<dbReference type="GeneID" id="175471"/>
<dbReference type="KEGG" id="cel:CELE_T27D1.1"/>
<dbReference type="UCSC" id="T27D1.1">
    <property type="organism name" value="c. elegans"/>
</dbReference>
<dbReference type="AGR" id="WB:WBGene00000885"/>
<dbReference type="CTD" id="175471"/>
<dbReference type="WormBase" id="T27D1.1">
    <property type="protein sequence ID" value="CE03745"/>
    <property type="gene ID" value="WBGene00000885"/>
    <property type="gene designation" value="cyn-9"/>
</dbReference>
<dbReference type="eggNOG" id="KOG0546">
    <property type="taxonomic scope" value="Eukaryota"/>
</dbReference>
<dbReference type="GeneTree" id="ENSGT00940000173731"/>
<dbReference type="HOGENOM" id="CLU_012062_33_4_1"/>
<dbReference type="InParanoid" id="Q09637"/>
<dbReference type="OMA" id="HCNGKHV"/>
<dbReference type="OrthoDB" id="193499at2759"/>
<dbReference type="PhylomeDB" id="Q09637"/>
<dbReference type="PRO" id="PR:Q09637"/>
<dbReference type="Proteomes" id="UP000001940">
    <property type="component" value="Chromosome III"/>
</dbReference>
<dbReference type="Bgee" id="WBGene00000885">
    <property type="expression patterns" value="Expressed in adult organism and 4 other cell types or tissues"/>
</dbReference>
<dbReference type="GO" id="GO:0005737">
    <property type="term" value="C:cytoplasm"/>
    <property type="evidence" value="ECO:0000318"/>
    <property type="project" value="GO_Central"/>
</dbReference>
<dbReference type="GO" id="GO:0005829">
    <property type="term" value="C:cytosol"/>
    <property type="evidence" value="ECO:0000318"/>
    <property type="project" value="GO_Central"/>
</dbReference>
<dbReference type="GO" id="GO:0016018">
    <property type="term" value="F:cyclosporin A binding"/>
    <property type="evidence" value="ECO:0000318"/>
    <property type="project" value="GO_Central"/>
</dbReference>
<dbReference type="GO" id="GO:0003755">
    <property type="term" value="F:peptidyl-prolyl cis-trans isomerase activity"/>
    <property type="evidence" value="ECO:0000250"/>
    <property type="project" value="WormBase"/>
</dbReference>
<dbReference type="GO" id="GO:0030198">
    <property type="term" value="P:extracellular matrix organization"/>
    <property type="evidence" value="ECO:0000304"/>
    <property type="project" value="WormBase"/>
</dbReference>
<dbReference type="GO" id="GO:0006457">
    <property type="term" value="P:protein folding"/>
    <property type="evidence" value="ECO:0000318"/>
    <property type="project" value="GO_Central"/>
</dbReference>
<dbReference type="FunFam" id="2.40.100.10:FF:000022">
    <property type="entry name" value="Peptidyl-prolyl cis-trans isomerase CYP95"/>
    <property type="match status" value="1"/>
</dbReference>
<dbReference type="Gene3D" id="2.40.100.10">
    <property type="entry name" value="Cyclophilin-like"/>
    <property type="match status" value="1"/>
</dbReference>
<dbReference type="InterPro" id="IPR029000">
    <property type="entry name" value="Cyclophilin-like_dom_sf"/>
</dbReference>
<dbReference type="InterPro" id="IPR020892">
    <property type="entry name" value="Cyclophilin-type_PPIase_CS"/>
</dbReference>
<dbReference type="InterPro" id="IPR002130">
    <property type="entry name" value="Cyclophilin-type_PPIase_dom"/>
</dbReference>
<dbReference type="PANTHER" id="PTHR11071">
    <property type="entry name" value="PEPTIDYL-PROLYL CIS-TRANS ISOMERASE"/>
    <property type="match status" value="1"/>
</dbReference>
<dbReference type="PANTHER" id="PTHR11071:SF561">
    <property type="entry name" value="PEPTIDYL-PROLYL CIS-TRANS ISOMERASE D-RELATED"/>
    <property type="match status" value="1"/>
</dbReference>
<dbReference type="Pfam" id="PF00160">
    <property type="entry name" value="Pro_isomerase"/>
    <property type="match status" value="1"/>
</dbReference>
<dbReference type="PRINTS" id="PR00153">
    <property type="entry name" value="CSAPPISMRASE"/>
</dbReference>
<dbReference type="SUPFAM" id="SSF50891">
    <property type="entry name" value="Cyclophilin-like"/>
    <property type="match status" value="1"/>
</dbReference>
<dbReference type="PROSITE" id="PS00170">
    <property type="entry name" value="CSA_PPIASE_1"/>
    <property type="match status" value="1"/>
</dbReference>
<dbReference type="PROSITE" id="PS50072">
    <property type="entry name" value="CSA_PPIASE_2"/>
    <property type="match status" value="1"/>
</dbReference>
<comment type="function">
    <text evidence="3">PPIases accelerate the folding of proteins. It catalyzes the cis-trans isomerization of proline imidic peptide bonds in oligopeptides. Thought to function as a catalyst in the folding and modification of cuticle collagens.</text>
</comment>
<comment type="catalytic activity">
    <reaction>
        <text>[protein]-peptidylproline (omega=180) = [protein]-peptidylproline (omega=0)</text>
        <dbReference type="Rhea" id="RHEA:16237"/>
        <dbReference type="Rhea" id="RHEA-COMP:10747"/>
        <dbReference type="Rhea" id="RHEA-COMP:10748"/>
        <dbReference type="ChEBI" id="CHEBI:83833"/>
        <dbReference type="ChEBI" id="CHEBI:83834"/>
        <dbReference type="EC" id="5.2.1.8"/>
    </reaction>
</comment>
<comment type="tissue specificity">
    <text evidence="3">Co-expressed with pdi-1 in the syncytial hypodermis.</text>
</comment>
<comment type="developmental stage">
    <text evidence="3">Expression significantly up-regulated in the middle of the L3 (22 hours) and L4 (26 hours) larval stages.</text>
</comment>
<comment type="similarity">
    <text evidence="4">Belongs to the cyclophilin-type PPIase family.</text>
</comment>
<name>CYP9_CAEEL</name>